<keyword id="KW-0004">4Fe-4S</keyword>
<keyword id="KW-0997">Cell inner membrane</keyword>
<keyword id="KW-1003">Cell membrane</keyword>
<keyword id="KW-0408">Iron</keyword>
<keyword id="KW-0411">Iron-sulfur</keyword>
<keyword id="KW-0472">Membrane</keyword>
<keyword id="KW-0479">Metal-binding</keyword>
<keyword id="KW-0520">NAD</keyword>
<keyword id="KW-0874">Quinone</keyword>
<keyword id="KW-1278">Translocase</keyword>
<keyword id="KW-0813">Transport</keyword>
<keyword id="KW-0830">Ubiquinone</keyword>
<feature type="chain" id="PRO_0000376250" description="NADH-quinone oxidoreductase subunit B">
    <location>
        <begin position="1"/>
        <end position="159"/>
    </location>
</feature>
<feature type="binding site" evidence="1">
    <location>
        <position position="32"/>
    </location>
    <ligand>
        <name>[4Fe-4S] cluster</name>
        <dbReference type="ChEBI" id="CHEBI:49883"/>
    </ligand>
</feature>
<feature type="binding site" evidence="1">
    <location>
        <position position="33"/>
    </location>
    <ligand>
        <name>[4Fe-4S] cluster</name>
        <dbReference type="ChEBI" id="CHEBI:49883"/>
    </ligand>
</feature>
<feature type="binding site" evidence="1">
    <location>
        <position position="97"/>
    </location>
    <ligand>
        <name>[4Fe-4S] cluster</name>
        <dbReference type="ChEBI" id="CHEBI:49883"/>
    </ligand>
</feature>
<feature type="binding site" evidence="1">
    <location>
        <position position="126"/>
    </location>
    <ligand>
        <name>[4Fe-4S] cluster</name>
        <dbReference type="ChEBI" id="CHEBI:49883"/>
    </ligand>
</feature>
<accession>B6JNA1</accession>
<protein>
    <recommendedName>
        <fullName evidence="1">NADH-quinone oxidoreductase subunit B</fullName>
        <ecNumber evidence="1">7.1.1.-</ecNumber>
    </recommendedName>
    <alternativeName>
        <fullName evidence="1">NADH dehydrogenase I subunit B</fullName>
    </alternativeName>
    <alternativeName>
        <fullName evidence="1">NDH-1 subunit B</fullName>
    </alternativeName>
</protein>
<comment type="function">
    <text evidence="1">NDH-1 shuttles electrons from NADH, via FMN and iron-sulfur (Fe-S) centers, to quinones in the respiratory chain. The immediate electron acceptor for the enzyme in this species is believed to be ubiquinone. Couples the redox reaction to proton translocation (for every two electrons transferred, four hydrogen ions are translocated across the cytoplasmic membrane), and thus conserves the redox energy in a proton gradient.</text>
</comment>
<comment type="catalytic activity">
    <reaction evidence="1">
        <text>a quinone + NADH + 5 H(+)(in) = a quinol + NAD(+) + 4 H(+)(out)</text>
        <dbReference type="Rhea" id="RHEA:57888"/>
        <dbReference type="ChEBI" id="CHEBI:15378"/>
        <dbReference type="ChEBI" id="CHEBI:24646"/>
        <dbReference type="ChEBI" id="CHEBI:57540"/>
        <dbReference type="ChEBI" id="CHEBI:57945"/>
        <dbReference type="ChEBI" id="CHEBI:132124"/>
    </reaction>
</comment>
<comment type="cofactor">
    <cofactor evidence="1">
        <name>[4Fe-4S] cluster</name>
        <dbReference type="ChEBI" id="CHEBI:49883"/>
    </cofactor>
    <text evidence="1">Binds 1 [4Fe-4S] cluster.</text>
</comment>
<comment type="subunit">
    <text evidence="1">NDH-1 is composed of 14 different subunits. Subunits NuoB, C, D, E, F, and G constitute the peripheral sector of the complex.</text>
</comment>
<comment type="subcellular location">
    <subcellularLocation>
        <location evidence="1">Cell inner membrane</location>
        <topology evidence="1">Peripheral membrane protein</topology>
        <orientation evidence="1">Cytoplasmic side</orientation>
    </subcellularLocation>
</comment>
<comment type="similarity">
    <text evidence="1">Belongs to the complex I 20 kDa subunit family.</text>
</comment>
<reference key="1">
    <citation type="submission" date="2008-10" db="EMBL/GenBank/DDBJ databases">
        <title>The complete genome sequence of Helicobacter pylori strain P12.</title>
        <authorList>
            <person name="Fischer W."/>
            <person name="Windhager L."/>
            <person name="Karnholz A."/>
            <person name="Zeiller M."/>
            <person name="Zimmer R."/>
            <person name="Haas R."/>
        </authorList>
    </citation>
    <scope>NUCLEOTIDE SEQUENCE [LARGE SCALE GENOMIC DNA]</scope>
    <source>
        <strain>P12</strain>
    </source>
</reference>
<proteinExistence type="inferred from homology"/>
<gene>
    <name evidence="1" type="primary">nuoB</name>
    <name type="ordered locus">HPP12_1227</name>
</gene>
<sequence>MQQAPVVLSTLDKLLNWGRSNSLWPLTYGLACCAIEMMATGGSRFDFDRFGTIFRASPRQSDVMIIAGTLTKKHAEFMRRLYDQMPEPKWVISMGSCANTGGMFNTYATVQGADRIVPVDIYLPGCAPRPETLQYALMVLQDKIRRSKAIKQDAPKRLV</sequence>
<dbReference type="EC" id="7.1.1.-" evidence="1"/>
<dbReference type="EMBL" id="CP001217">
    <property type="protein sequence ID" value="ACJ08379.1"/>
    <property type="molecule type" value="Genomic_DNA"/>
</dbReference>
<dbReference type="SMR" id="B6JNA1"/>
<dbReference type="KEGG" id="hpp:HPP12_1227"/>
<dbReference type="HOGENOM" id="CLU_055737_7_3_7"/>
<dbReference type="Proteomes" id="UP000008198">
    <property type="component" value="Chromosome"/>
</dbReference>
<dbReference type="GO" id="GO:0005886">
    <property type="term" value="C:plasma membrane"/>
    <property type="evidence" value="ECO:0007669"/>
    <property type="project" value="UniProtKB-SubCell"/>
</dbReference>
<dbReference type="GO" id="GO:0045271">
    <property type="term" value="C:respiratory chain complex I"/>
    <property type="evidence" value="ECO:0007669"/>
    <property type="project" value="TreeGrafter"/>
</dbReference>
<dbReference type="GO" id="GO:0051539">
    <property type="term" value="F:4 iron, 4 sulfur cluster binding"/>
    <property type="evidence" value="ECO:0007669"/>
    <property type="project" value="UniProtKB-KW"/>
</dbReference>
<dbReference type="GO" id="GO:0005506">
    <property type="term" value="F:iron ion binding"/>
    <property type="evidence" value="ECO:0007669"/>
    <property type="project" value="UniProtKB-UniRule"/>
</dbReference>
<dbReference type="GO" id="GO:0008137">
    <property type="term" value="F:NADH dehydrogenase (ubiquinone) activity"/>
    <property type="evidence" value="ECO:0007669"/>
    <property type="project" value="InterPro"/>
</dbReference>
<dbReference type="GO" id="GO:0050136">
    <property type="term" value="F:NADH:ubiquinone reductase (non-electrogenic) activity"/>
    <property type="evidence" value="ECO:0007669"/>
    <property type="project" value="UniProtKB-UniRule"/>
</dbReference>
<dbReference type="GO" id="GO:0048038">
    <property type="term" value="F:quinone binding"/>
    <property type="evidence" value="ECO:0007669"/>
    <property type="project" value="UniProtKB-KW"/>
</dbReference>
<dbReference type="GO" id="GO:0009060">
    <property type="term" value="P:aerobic respiration"/>
    <property type="evidence" value="ECO:0007669"/>
    <property type="project" value="TreeGrafter"/>
</dbReference>
<dbReference type="GO" id="GO:0015990">
    <property type="term" value="P:electron transport coupled proton transport"/>
    <property type="evidence" value="ECO:0007669"/>
    <property type="project" value="TreeGrafter"/>
</dbReference>
<dbReference type="FunFam" id="3.40.50.12280:FF:000002">
    <property type="entry name" value="NADH-quinone oxidoreductase subunit B"/>
    <property type="match status" value="1"/>
</dbReference>
<dbReference type="Gene3D" id="3.40.50.12280">
    <property type="match status" value="1"/>
</dbReference>
<dbReference type="HAMAP" id="MF_01356">
    <property type="entry name" value="NDH1_NuoB"/>
    <property type="match status" value="1"/>
</dbReference>
<dbReference type="InterPro" id="IPR006137">
    <property type="entry name" value="NADH_UbQ_OxRdtase-like_20kDa"/>
</dbReference>
<dbReference type="InterPro" id="IPR006138">
    <property type="entry name" value="NADH_UQ_OxRdtase_20Kd_su"/>
</dbReference>
<dbReference type="NCBIfam" id="TIGR01957">
    <property type="entry name" value="nuoB_fam"/>
    <property type="match status" value="1"/>
</dbReference>
<dbReference type="NCBIfam" id="NF005012">
    <property type="entry name" value="PRK06411.1"/>
    <property type="match status" value="1"/>
</dbReference>
<dbReference type="PANTHER" id="PTHR11995">
    <property type="entry name" value="NADH DEHYDROGENASE"/>
    <property type="match status" value="1"/>
</dbReference>
<dbReference type="PANTHER" id="PTHR11995:SF14">
    <property type="entry name" value="NADH DEHYDROGENASE [UBIQUINONE] IRON-SULFUR PROTEIN 7, MITOCHONDRIAL"/>
    <property type="match status" value="1"/>
</dbReference>
<dbReference type="Pfam" id="PF01058">
    <property type="entry name" value="Oxidored_q6"/>
    <property type="match status" value="1"/>
</dbReference>
<dbReference type="SUPFAM" id="SSF56770">
    <property type="entry name" value="HydA/Nqo6-like"/>
    <property type="match status" value="1"/>
</dbReference>
<organism>
    <name type="scientific">Helicobacter pylori (strain P12)</name>
    <dbReference type="NCBI Taxonomy" id="570508"/>
    <lineage>
        <taxon>Bacteria</taxon>
        <taxon>Pseudomonadati</taxon>
        <taxon>Campylobacterota</taxon>
        <taxon>Epsilonproteobacteria</taxon>
        <taxon>Campylobacterales</taxon>
        <taxon>Helicobacteraceae</taxon>
        <taxon>Helicobacter</taxon>
    </lineage>
</organism>
<name>NUOB_HELP2</name>
<evidence type="ECO:0000255" key="1">
    <source>
        <dbReference type="HAMAP-Rule" id="MF_01356"/>
    </source>
</evidence>